<keyword id="KW-0156">Chromatin regulator</keyword>
<keyword id="KW-0227">DNA damage</keyword>
<keyword id="KW-0234">DNA repair</keyword>
<keyword id="KW-0539">Nucleus</keyword>
<keyword id="KW-0804">Transcription</keyword>
<keyword id="KW-0805">Transcription regulation</keyword>
<name>EAF3_CRYNB</name>
<organism>
    <name type="scientific">Cryptococcus neoformans var. neoformans serotype D (strain B-3501A)</name>
    <name type="common">Filobasidiella neoformans</name>
    <dbReference type="NCBI Taxonomy" id="283643"/>
    <lineage>
        <taxon>Eukaryota</taxon>
        <taxon>Fungi</taxon>
        <taxon>Dikarya</taxon>
        <taxon>Basidiomycota</taxon>
        <taxon>Agaricomycotina</taxon>
        <taxon>Tremellomycetes</taxon>
        <taxon>Tremellales</taxon>
        <taxon>Cryptococcaceae</taxon>
        <taxon>Cryptococcus</taxon>
        <taxon>Cryptococcus neoformans species complex</taxon>
    </lineage>
</organism>
<comment type="function">
    <text evidence="1">Involved in deacetylation of histones, chromatin assembly and chromosome segregation. May act as a transcriptional oscillator, directing histone deacetylases to specific chromosomal domains. Component of the NuA4 histone acetyltransferase complex which is involved in transcriptional activation of selected genes principally by acetylation of nucleosomal histone H4 and H2A. The NuA4 complex is also involved in DNA repair (By similarity).</text>
</comment>
<comment type="subunit">
    <text evidence="1">Component of the NuA4 histone acetyltransferase complex.</text>
</comment>
<comment type="subcellular location">
    <subcellularLocation>
        <location evidence="3">Nucleus</location>
    </subcellularLocation>
</comment>
<comment type="similarity">
    <text evidence="5">Belongs to the MRG family.</text>
</comment>
<reference key="1">
    <citation type="journal article" date="2005" name="Science">
        <title>The genome of the basidiomycetous yeast and human pathogen Cryptococcus neoformans.</title>
        <authorList>
            <person name="Loftus B.J."/>
            <person name="Fung E."/>
            <person name="Roncaglia P."/>
            <person name="Rowley D."/>
            <person name="Amedeo P."/>
            <person name="Bruno D."/>
            <person name="Vamathevan J."/>
            <person name="Miranda M."/>
            <person name="Anderson I.J."/>
            <person name="Fraser J.A."/>
            <person name="Allen J.E."/>
            <person name="Bosdet I.E."/>
            <person name="Brent M.R."/>
            <person name="Chiu R."/>
            <person name="Doering T.L."/>
            <person name="Donlin M.J."/>
            <person name="D'Souza C.A."/>
            <person name="Fox D.S."/>
            <person name="Grinberg V."/>
            <person name="Fu J."/>
            <person name="Fukushima M."/>
            <person name="Haas B.J."/>
            <person name="Huang J.C."/>
            <person name="Janbon G."/>
            <person name="Jones S.J.M."/>
            <person name="Koo H.L."/>
            <person name="Krzywinski M.I."/>
            <person name="Kwon-Chung K.J."/>
            <person name="Lengeler K.B."/>
            <person name="Maiti R."/>
            <person name="Marra M.A."/>
            <person name="Marra R.E."/>
            <person name="Mathewson C.A."/>
            <person name="Mitchell T.G."/>
            <person name="Pertea M."/>
            <person name="Riggs F.R."/>
            <person name="Salzberg S.L."/>
            <person name="Schein J.E."/>
            <person name="Shvartsbeyn A."/>
            <person name="Shin H."/>
            <person name="Shumway M."/>
            <person name="Specht C.A."/>
            <person name="Suh B.B."/>
            <person name="Tenney A."/>
            <person name="Utterback T.R."/>
            <person name="Wickes B.L."/>
            <person name="Wortman J.R."/>
            <person name="Wye N.H."/>
            <person name="Kronstad J.W."/>
            <person name="Lodge J.K."/>
            <person name="Heitman J."/>
            <person name="Davis R.W."/>
            <person name="Fraser C.M."/>
            <person name="Hyman R.W."/>
        </authorList>
    </citation>
    <scope>NUCLEOTIDE SEQUENCE [LARGE SCALE GENOMIC DNA]</scope>
    <source>
        <strain>B-3501A</strain>
    </source>
</reference>
<accession>P0CO87</accession>
<accession>B6YPM2</accession>
<accession>Q55QR4</accession>
<accession>Q5KFF1</accession>
<proteinExistence type="inferred from homology"/>
<evidence type="ECO:0000250" key="1"/>
<evidence type="ECO:0000255" key="2"/>
<evidence type="ECO:0000255" key="3">
    <source>
        <dbReference type="PROSITE-ProRule" id="PRU00972"/>
    </source>
</evidence>
<evidence type="ECO:0000256" key="4">
    <source>
        <dbReference type="SAM" id="MobiDB-lite"/>
    </source>
</evidence>
<evidence type="ECO:0000305" key="5"/>
<sequence length="305" mass="35135">MAGAVPQFMVDEYVLAYHGPLLYEARVILAEVWDESNTLLGTVGPHYFIHYKGWKQTWDEWVPESRLLKLNEAGFAKRRALLDAQAKKGRSTGGSGGTGSPGAGKGGLKDKKKDTKKRGRDAMESESDFMKRPEVKIVIPDVLKLVLVDDWENVTKNNQLVALPRKPNVRELLEEYRQYASASKKQERSDRATALLSEIISGITLYFDKALGNNLLYRFERAQYVEQKRQNPEKPMSEIYGAEHLLRLFVNFGPFIAYTNIDTESLNILRDYINDIMQWMIKEQKRLFMKEYEETTTHYQNLSRS</sequence>
<protein>
    <recommendedName>
        <fullName>Chromatin modification-related protein EAF3</fullName>
    </recommendedName>
</protein>
<gene>
    <name type="primary">EAF3</name>
    <name type="ordered locus">CNBF2740</name>
</gene>
<feature type="chain" id="PRO_0000410150" description="Chromatin modification-related protein EAF3">
    <location>
        <begin position="1"/>
        <end position="305"/>
    </location>
</feature>
<feature type="domain" description="Tudor-knot" evidence="2">
    <location>
        <begin position="14"/>
        <end position="67"/>
    </location>
</feature>
<feature type="domain" description="MRG" evidence="3">
    <location>
        <begin position="131"/>
        <end position="304"/>
    </location>
</feature>
<feature type="region of interest" description="Disordered" evidence="4">
    <location>
        <begin position="86"/>
        <end position="127"/>
    </location>
</feature>
<feature type="compositionally biased region" description="Gly residues" evidence="4">
    <location>
        <begin position="91"/>
        <end position="106"/>
    </location>
</feature>
<dbReference type="EMBL" id="AAEY01000032">
    <property type="protein sequence ID" value="EAL19947.1"/>
    <property type="molecule type" value="Genomic_DNA"/>
</dbReference>
<dbReference type="RefSeq" id="XP_774594.1">
    <property type="nucleotide sequence ID" value="XM_769501.1"/>
</dbReference>
<dbReference type="SMR" id="P0CO87"/>
<dbReference type="EnsemblFungi" id="AAW44213">
    <property type="protein sequence ID" value="AAW44213"/>
    <property type="gene ID" value="CNF01960"/>
</dbReference>
<dbReference type="GeneID" id="4936826"/>
<dbReference type="KEGG" id="cnb:CNBF2740"/>
<dbReference type="VEuPathDB" id="FungiDB:CNBF2740"/>
<dbReference type="HOGENOM" id="CLU_039566_1_1_1"/>
<dbReference type="OrthoDB" id="5381at5206"/>
<dbReference type="GO" id="GO:0035267">
    <property type="term" value="C:NuA4 histone acetyltransferase complex"/>
    <property type="evidence" value="ECO:0007669"/>
    <property type="project" value="EnsemblFungi"/>
</dbReference>
<dbReference type="GO" id="GO:0032221">
    <property type="term" value="C:Rpd3S complex"/>
    <property type="evidence" value="ECO:0007669"/>
    <property type="project" value="EnsemblFungi"/>
</dbReference>
<dbReference type="GO" id="GO:0006338">
    <property type="term" value="P:chromatin remodeling"/>
    <property type="evidence" value="ECO:0007669"/>
    <property type="project" value="UniProtKB-ARBA"/>
</dbReference>
<dbReference type="GO" id="GO:0006281">
    <property type="term" value="P:DNA repair"/>
    <property type="evidence" value="ECO:0007669"/>
    <property type="project" value="UniProtKB-KW"/>
</dbReference>
<dbReference type="GO" id="GO:0006355">
    <property type="term" value="P:regulation of DNA-templated transcription"/>
    <property type="evidence" value="ECO:0007669"/>
    <property type="project" value="InterPro"/>
</dbReference>
<dbReference type="FunFam" id="1.10.274.30:FF:000004">
    <property type="entry name" value="Putative Chromatin modification-related protein eaf3"/>
    <property type="match status" value="1"/>
</dbReference>
<dbReference type="FunFam" id="2.30.30.140:FF:000104">
    <property type="entry name" value="Unplaced genomic scaffold supercont2.8, whole genome shotgun sequence"/>
    <property type="match status" value="1"/>
</dbReference>
<dbReference type="Gene3D" id="2.30.30.140">
    <property type="match status" value="1"/>
</dbReference>
<dbReference type="Gene3D" id="1.10.274.30">
    <property type="entry name" value="MRG domain"/>
    <property type="match status" value="1"/>
</dbReference>
<dbReference type="InterPro" id="IPR016197">
    <property type="entry name" value="Chromo-like_dom_sf"/>
</dbReference>
<dbReference type="InterPro" id="IPR000953">
    <property type="entry name" value="Chromo/chromo_shadow_dom"/>
</dbReference>
<dbReference type="InterPro" id="IPR008676">
    <property type="entry name" value="MRG"/>
</dbReference>
<dbReference type="InterPro" id="IPR038217">
    <property type="entry name" value="MRG_C_sf"/>
</dbReference>
<dbReference type="InterPro" id="IPR026541">
    <property type="entry name" value="MRG_dom"/>
</dbReference>
<dbReference type="InterPro" id="IPR053820">
    <property type="entry name" value="MSL3_chromo-like"/>
</dbReference>
<dbReference type="PANTHER" id="PTHR10880">
    <property type="entry name" value="MORTALITY FACTOR 4-LIKE PROTEIN"/>
    <property type="match status" value="1"/>
</dbReference>
<dbReference type="PANTHER" id="PTHR10880:SF15">
    <property type="entry name" value="MSL COMPLEX SUBUNIT 3"/>
    <property type="match status" value="1"/>
</dbReference>
<dbReference type="Pfam" id="PF05712">
    <property type="entry name" value="MRG"/>
    <property type="match status" value="1"/>
</dbReference>
<dbReference type="Pfam" id="PF22732">
    <property type="entry name" value="MSL3_chromo-like"/>
    <property type="match status" value="1"/>
</dbReference>
<dbReference type="PIRSF" id="PIRSF038133">
    <property type="entry name" value="HAT_Nua4_EAF3/MRG15"/>
    <property type="match status" value="1"/>
</dbReference>
<dbReference type="SMART" id="SM00298">
    <property type="entry name" value="CHROMO"/>
    <property type="match status" value="1"/>
</dbReference>
<dbReference type="SUPFAM" id="SSF54160">
    <property type="entry name" value="Chromo domain-like"/>
    <property type="match status" value="1"/>
</dbReference>
<dbReference type="PROSITE" id="PS51640">
    <property type="entry name" value="MRG"/>
    <property type="match status" value="1"/>
</dbReference>